<reference key="1">
    <citation type="submission" date="2004-12" db="EMBL/GenBank/DDBJ databases">
        <title>The genome sequence of Borrelia hermsii and Borrelia turicatae: comparative analysis of two agents of endemic N. America relapsing fever.</title>
        <authorList>
            <person name="Porcella S.F."/>
            <person name="Raffel S.J."/>
            <person name="Schrumpf M.E."/>
            <person name="Montgomery B."/>
            <person name="Smith T."/>
            <person name="Schwan T.G."/>
        </authorList>
    </citation>
    <scope>NUCLEOTIDE SEQUENCE [LARGE SCALE GENOMIC DNA]</scope>
    <source>
        <strain>91E135</strain>
    </source>
</reference>
<protein>
    <recommendedName>
        <fullName evidence="1">Elongation factor P</fullName>
        <shortName evidence="1">EF-P</shortName>
    </recommendedName>
</protein>
<organism>
    <name type="scientific">Borrelia turicatae (strain 91E135)</name>
    <dbReference type="NCBI Taxonomy" id="314724"/>
    <lineage>
        <taxon>Bacteria</taxon>
        <taxon>Pseudomonadati</taxon>
        <taxon>Spirochaetota</taxon>
        <taxon>Spirochaetia</taxon>
        <taxon>Spirochaetales</taxon>
        <taxon>Borreliaceae</taxon>
        <taxon>Borrelia</taxon>
    </lineage>
</organism>
<name>EFP_BORT9</name>
<accession>A1QZ08</accession>
<sequence length="192" mass="21740">MGTIKSGDIEKGTFLLFKGMPHIVLEREFSKMGRGGSIVRLKLKNLKNKSVVKETLKGADTVEEIEVLEVASQYLYRENENLIFMDLETYDQFDVNLREISNIEDKVMFLQEAGIYSLVKWDNEVIDLRLPPKVAFEVVDAEIAVKGDTVTNAMKNVTLHTGLVVKAPLFINVGDKILVNSETKEYAERVKE</sequence>
<proteinExistence type="inferred from homology"/>
<keyword id="KW-0963">Cytoplasm</keyword>
<keyword id="KW-0251">Elongation factor</keyword>
<keyword id="KW-0648">Protein biosynthesis</keyword>
<keyword id="KW-1185">Reference proteome</keyword>
<dbReference type="EMBL" id="CP000049">
    <property type="protein sequence ID" value="AAX17550.1"/>
    <property type="molecule type" value="Genomic_DNA"/>
</dbReference>
<dbReference type="RefSeq" id="WP_011772169.1">
    <property type="nucleotide sequence ID" value="NC_008710.1"/>
</dbReference>
<dbReference type="SMR" id="A1QZ08"/>
<dbReference type="KEGG" id="btu:BT0214"/>
<dbReference type="eggNOG" id="COG0231">
    <property type="taxonomic scope" value="Bacteria"/>
</dbReference>
<dbReference type="HOGENOM" id="CLU_074944_0_2_12"/>
<dbReference type="UniPathway" id="UPA00345"/>
<dbReference type="Proteomes" id="UP000001205">
    <property type="component" value="Chromosome"/>
</dbReference>
<dbReference type="GO" id="GO:0005737">
    <property type="term" value="C:cytoplasm"/>
    <property type="evidence" value="ECO:0007669"/>
    <property type="project" value="UniProtKB-SubCell"/>
</dbReference>
<dbReference type="GO" id="GO:0003746">
    <property type="term" value="F:translation elongation factor activity"/>
    <property type="evidence" value="ECO:0007669"/>
    <property type="project" value="UniProtKB-UniRule"/>
</dbReference>
<dbReference type="GO" id="GO:0043043">
    <property type="term" value="P:peptide biosynthetic process"/>
    <property type="evidence" value="ECO:0007669"/>
    <property type="project" value="InterPro"/>
</dbReference>
<dbReference type="CDD" id="cd05794">
    <property type="entry name" value="S1_EF-P_repeat_2"/>
    <property type="match status" value="1"/>
</dbReference>
<dbReference type="FunFam" id="2.40.50.140:FF:000004">
    <property type="entry name" value="Elongation factor P"/>
    <property type="match status" value="1"/>
</dbReference>
<dbReference type="Gene3D" id="2.30.30.30">
    <property type="match status" value="1"/>
</dbReference>
<dbReference type="Gene3D" id="2.40.50.140">
    <property type="entry name" value="Nucleic acid-binding proteins"/>
    <property type="match status" value="2"/>
</dbReference>
<dbReference type="HAMAP" id="MF_00141">
    <property type="entry name" value="EF_P"/>
    <property type="match status" value="1"/>
</dbReference>
<dbReference type="InterPro" id="IPR015365">
    <property type="entry name" value="Elong-fact-P_C"/>
</dbReference>
<dbReference type="InterPro" id="IPR012340">
    <property type="entry name" value="NA-bd_OB-fold"/>
</dbReference>
<dbReference type="InterPro" id="IPR014722">
    <property type="entry name" value="Rib_uL2_dom2"/>
</dbReference>
<dbReference type="InterPro" id="IPR020599">
    <property type="entry name" value="Transl_elong_fac_P/YeiP"/>
</dbReference>
<dbReference type="InterPro" id="IPR013185">
    <property type="entry name" value="Transl_elong_KOW-like"/>
</dbReference>
<dbReference type="InterPro" id="IPR001059">
    <property type="entry name" value="Transl_elong_P/YeiP_cen"/>
</dbReference>
<dbReference type="InterPro" id="IPR011768">
    <property type="entry name" value="Transl_elongation_fac_P"/>
</dbReference>
<dbReference type="InterPro" id="IPR008991">
    <property type="entry name" value="Translation_prot_SH3-like_sf"/>
</dbReference>
<dbReference type="NCBIfam" id="TIGR00038">
    <property type="entry name" value="efp"/>
    <property type="match status" value="1"/>
</dbReference>
<dbReference type="NCBIfam" id="NF001810">
    <property type="entry name" value="PRK00529.1"/>
    <property type="match status" value="1"/>
</dbReference>
<dbReference type="PANTHER" id="PTHR30053">
    <property type="entry name" value="ELONGATION FACTOR P"/>
    <property type="match status" value="1"/>
</dbReference>
<dbReference type="PANTHER" id="PTHR30053:SF12">
    <property type="entry name" value="ELONGATION FACTOR P (EF-P) FAMILY PROTEIN"/>
    <property type="match status" value="1"/>
</dbReference>
<dbReference type="Pfam" id="PF01132">
    <property type="entry name" value="EFP"/>
    <property type="match status" value="1"/>
</dbReference>
<dbReference type="Pfam" id="PF08207">
    <property type="entry name" value="EFP_N"/>
    <property type="match status" value="1"/>
</dbReference>
<dbReference type="Pfam" id="PF09285">
    <property type="entry name" value="Elong-fact-P_C"/>
    <property type="match status" value="1"/>
</dbReference>
<dbReference type="PIRSF" id="PIRSF005901">
    <property type="entry name" value="EF-P"/>
    <property type="match status" value="1"/>
</dbReference>
<dbReference type="SMART" id="SM01185">
    <property type="entry name" value="EFP"/>
    <property type="match status" value="1"/>
</dbReference>
<dbReference type="SMART" id="SM00841">
    <property type="entry name" value="Elong-fact-P_C"/>
    <property type="match status" value="1"/>
</dbReference>
<dbReference type="SUPFAM" id="SSF50249">
    <property type="entry name" value="Nucleic acid-binding proteins"/>
    <property type="match status" value="2"/>
</dbReference>
<dbReference type="SUPFAM" id="SSF50104">
    <property type="entry name" value="Translation proteins SH3-like domain"/>
    <property type="match status" value="1"/>
</dbReference>
<gene>
    <name evidence="1" type="primary">efp</name>
    <name type="ordered locus">BT0214</name>
</gene>
<comment type="function">
    <text evidence="1">Involved in peptide bond synthesis. Stimulates efficient translation and peptide-bond synthesis on native or reconstituted 70S ribosomes in vitro. Probably functions indirectly by altering the affinity of the ribosome for aminoacyl-tRNA, thus increasing their reactivity as acceptors for peptidyl transferase.</text>
</comment>
<comment type="pathway">
    <text evidence="1">Protein biosynthesis; polypeptide chain elongation.</text>
</comment>
<comment type="subcellular location">
    <subcellularLocation>
        <location evidence="1">Cytoplasm</location>
    </subcellularLocation>
</comment>
<comment type="similarity">
    <text evidence="1">Belongs to the elongation factor P family.</text>
</comment>
<evidence type="ECO:0000255" key="1">
    <source>
        <dbReference type="HAMAP-Rule" id="MF_00141"/>
    </source>
</evidence>
<feature type="chain" id="PRO_1000122993" description="Elongation factor P">
    <location>
        <begin position="1"/>
        <end position="192"/>
    </location>
</feature>